<dbReference type="EMBL" id="AP001297">
    <property type="protein sequence ID" value="BAB03005.1"/>
    <property type="molecule type" value="Genomic_DNA"/>
</dbReference>
<dbReference type="EMBL" id="CP002686">
    <property type="protein sequence ID" value="AEE76825.1"/>
    <property type="molecule type" value="Genomic_DNA"/>
</dbReference>
<dbReference type="EMBL" id="AK117299">
    <property type="protein sequence ID" value="BAC41970.1"/>
    <property type="molecule type" value="mRNA"/>
</dbReference>
<dbReference type="EMBL" id="BT008354">
    <property type="protein sequence ID" value="AAP37713.1"/>
    <property type="molecule type" value="mRNA"/>
</dbReference>
<dbReference type="RefSeq" id="NP_189030.1">
    <property type="nucleotide sequence ID" value="NM_113293.5"/>
</dbReference>
<dbReference type="SMR" id="Q9LIR8"/>
<dbReference type="BioGRID" id="7303">
    <property type="interactions" value="4"/>
</dbReference>
<dbReference type="FunCoup" id="Q9LIR8">
    <property type="interactions" value="5"/>
</dbReference>
<dbReference type="IntAct" id="Q9LIR8">
    <property type="interactions" value="2"/>
</dbReference>
<dbReference type="STRING" id="3702.Q9LIR8"/>
<dbReference type="PaxDb" id="3702-AT3G23880.1"/>
<dbReference type="EnsemblPlants" id="AT3G23880.1">
    <property type="protein sequence ID" value="AT3G23880.1"/>
    <property type="gene ID" value="AT3G23880"/>
</dbReference>
<dbReference type="GeneID" id="821971"/>
<dbReference type="Gramene" id="AT3G23880.1">
    <property type="protein sequence ID" value="AT3G23880.1"/>
    <property type="gene ID" value="AT3G23880"/>
</dbReference>
<dbReference type="KEGG" id="ath:AT3G23880"/>
<dbReference type="Araport" id="AT3G23880"/>
<dbReference type="TAIR" id="AT3G23880"/>
<dbReference type="eggNOG" id="ENOG502QUVH">
    <property type="taxonomic scope" value="Eukaryota"/>
</dbReference>
<dbReference type="HOGENOM" id="CLU_027176_1_4_1"/>
<dbReference type="InParanoid" id="Q9LIR8"/>
<dbReference type="OMA" id="RDNSFKY"/>
<dbReference type="PhylomeDB" id="Q9LIR8"/>
<dbReference type="PRO" id="PR:Q9LIR8"/>
<dbReference type="Proteomes" id="UP000006548">
    <property type="component" value="Chromosome 3"/>
</dbReference>
<dbReference type="ExpressionAtlas" id="Q9LIR8">
    <property type="expression patterns" value="baseline and differential"/>
</dbReference>
<dbReference type="GO" id="GO:0005634">
    <property type="term" value="C:nucleus"/>
    <property type="evidence" value="ECO:0007005"/>
    <property type="project" value="TAIR"/>
</dbReference>
<dbReference type="CDD" id="cd22157">
    <property type="entry name" value="F-box_AtFBW1-like"/>
    <property type="match status" value="1"/>
</dbReference>
<dbReference type="FunFam" id="1.20.1280.50:FF:000078">
    <property type="entry name" value="F-box family protein"/>
    <property type="match status" value="1"/>
</dbReference>
<dbReference type="Gene3D" id="1.20.1280.50">
    <property type="match status" value="1"/>
</dbReference>
<dbReference type="InterPro" id="IPR013187">
    <property type="entry name" value="F-box-assoc_dom_typ3"/>
</dbReference>
<dbReference type="InterPro" id="IPR017451">
    <property type="entry name" value="F-box-assoc_interact_dom"/>
</dbReference>
<dbReference type="InterPro" id="IPR036047">
    <property type="entry name" value="F-box-like_dom_sf"/>
</dbReference>
<dbReference type="InterPro" id="IPR001810">
    <property type="entry name" value="F-box_dom"/>
</dbReference>
<dbReference type="InterPro" id="IPR050796">
    <property type="entry name" value="SCF_F-box_component"/>
</dbReference>
<dbReference type="NCBIfam" id="TIGR01640">
    <property type="entry name" value="F_box_assoc_1"/>
    <property type="match status" value="1"/>
</dbReference>
<dbReference type="PANTHER" id="PTHR31672">
    <property type="entry name" value="BNACNNG10540D PROTEIN"/>
    <property type="match status" value="1"/>
</dbReference>
<dbReference type="PANTHER" id="PTHR31672:SF13">
    <property type="entry name" value="F-BOX PROTEIN CPR30-LIKE"/>
    <property type="match status" value="1"/>
</dbReference>
<dbReference type="Pfam" id="PF00646">
    <property type="entry name" value="F-box"/>
    <property type="match status" value="1"/>
</dbReference>
<dbReference type="Pfam" id="PF08268">
    <property type="entry name" value="FBA_3"/>
    <property type="match status" value="1"/>
</dbReference>
<dbReference type="SMART" id="SM00256">
    <property type="entry name" value="FBOX"/>
    <property type="match status" value="1"/>
</dbReference>
<dbReference type="SUPFAM" id="SSF81383">
    <property type="entry name" value="F-box domain"/>
    <property type="match status" value="1"/>
</dbReference>
<dbReference type="PROSITE" id="PS50181">
    <property type="entry name" value="FBOX"/>
    <property type="match status" value="1"/>
</dbReference>
<organism>
    <name type="scientific">Arabidopsis thaliana</name>
    <name type="common">Mouse-ear cress</name>
    <dbReference type="NCBI Taxonomy" id="3702"/>
    <lineage>
        <taxon>Eukaryota</taxon>
        <taxon>Viridiplantae</taxon>
        <taxon>Streptophyta</taxon>
        <taxon>Embryophyta</taxon>
        <taxon>Tracheophyta</taxon>
        <taxon>Spermatophyta</taxon>
        <taxon>Magnoliopsida</taxon>
        <taxon>eudicotyledons</taxon>
        <taxon>Gunneridae</taxon>
        <taxon>Pentapetalae</taxon>
        <taxon>rosids</taxon>
        <taxon>malvids</taxon>
        <taxon>Brassicales</taxon>
        <taxon>Brassicaceae</taxon>
        <taxon>Camelineae</taxon>
        <taxon>Arabidopsis</taxon>
    </lineage>
</organism>
<proteinExistence type="evidence at transcript level"/>
<name>FBK67_ARATH</name>
<evidence type="ECO:0000255" key="1">
    <source>
        <dbReference type="PROSITE-ProRule" id="PRU00080"/>
    </source>
</evidence>
<sequence>MDETTREMFSPHNLPLEMMEEILLRLPVKSLTRFKCVCSSWRSLISETLFALKHALILETSKATTSTKSPYGVITTSRYHLKSCCIHSLYNASTVYVSEHDGELLGRDYYQVVGTCHGLVCFHVDYDKSLYLWNPTIKLQQRLSSSDLETSDDECVVTYGFGYDESEDDYKVVALLQQRHQVKIETKIYSTRQKLWRSNTSFPSGVVVADKSRSGIYINGTLNWAATSSSSSWTIISYDMSRDEFKELPGPVCCGRGCFTMTLGDLRGCLSMVCYCKGANADVWVMKEFGEVYSWSKLLSIPGLTDFVRPLWISDGLVVLLEFRSGLALYNCSNGRFHYPVSNSISGCRDAKVYLKTMVSPNDL</sequence>
<accession>Q9LIR8</accession>
<keyword id="KW-0880">Kelch repeat</keyword>
<keyword id="KW-1185">Reference proteome</keyword>
<keyword id="KW-0677">Repeat</keyword>
<gene>
    <name type="ordered locus">At3g23880</name>
    <name type="ORF">F14O13.7</name>
</gene>
<feature type="chain" id="PRO_0000283227" description="F-box/kelch-repeat protein At3g23880">
    <location>
        <begin position="1"/>
        <end position="364"/>
    </location>
</feature>
<feature type="domain" description="F-box" evidence="1">
    <location>
        <begin position="8"/>
        <end position="54"/>
    </location>
</feature>
<feature type="repeat" description="Kelch 1">
    <location>
        <begin position="169"/>
        <end position="215"/>
    </location>
</feature>
<feature type="repeat" description="Kelch 2">
    <location>
        <begin position="216"/>
        <end position="265"/>
    </location>
</feature>
<reference key="1">
    <citation type="journal article" date="2000" name="DNA Res.">
        <title>Structural analysis of Arabidopsis thaliana chromosome 3. II. Sequence features of the 4,251,695 bp regions covered by 90 P1, TAC and BAC clones.</title>
        <authorList>
            <person name="Kaneko T."/>
            <person name="Katoh T."/>
            <person name="Sato S."/>
            <person name="Nakamura Y."/>
            <person name="Asamizu E."/>
            <person name="Tabata S."/>
        </authorList>
    </citation>
    <scope>NUCLEOTIDE SEQUENCE [LARGE SCALE GENOMIC DNA]</scope>
    <source>
        <strain>cv. Columbia</strain>
    </source>
</reference>
<reference key="2">
    <citation type="journal article" date="2017" name="Plant J.">
        <title>Araport11: a complete reannotation of the Arabidopsis thaliana reference genome.</title>
        <authorList>
            <person name="Cheng C.Y."/>
            <person name="Krishnakumar V."/>
            <person name="Chan A.P."/>
            <person name="Thibaud-Nissen F."/>
            <person name="Schobel S."/>
            <person name="Town C.D."/>
        </authorList>
    </citation>
    <scope>GENOME REANNOTATION</scope>
    <source>
        <strain>cv. Columbia</strain>
    </source>
</reference>
<reference key="3">
    <citation type="journal article" date="2002" name="Science">
        <title>Functional annotation of a full-length Arabidopsis cDNA collection.</title>
        <authorList>
            <person name="Seki M."/>
            <person name="Narusaka M."/>
            <person name="Kamiya A."/>
            <person name="Ishida J."/>
            <person name="Satou M."/>
            <person name="Sakurai T."/>
            <person name="Nakajima M."/>
            <person name="Enju A."/>
            <person name="Akiyama K."/>
            <person name="Oono Y."/>
            <person name="Muramatsu M."/>
            <person name="Hayashizaki Y."/>
            <person name="Kawai J."/>
            <person name="Carninci P."/>
            <person name="Itoh M."/>
            <person name="Ishii Y."/>
            <person name="Arakawa T."/>
            <person name="Shibata K."/>
            <person name="Shinagawa A."/>
            <person name="Shinozaki K."/>
        </authorList>
    </citation>
    <scope>NUCLEOTIDE SEQUENCE [LARGE SCALE MRNA]</scope>
    <source>
        <strain>cv. Columbia</strain>
    </source>
</reference>
<reference key="4">
    <citation type="journal article" date="2003" name="Science">
        <title>Empirical analysis of transcriptional activity in the Arabidopsis genome.</title>
        <authorList>
            <person name="Yamada K."/>
            <person name="Lim J."/>
            <person name="Dale J.M."/>
            <person name="Chen H."/>
            <person name="Shinn P."/>
            <person name="Palm C.J."/>
            <person name="Southwick A.M."/>
            <person name="Wu H.C."/>
            <person name="Kim C.J."/>
            <person name="Nguyen M."/>
            <person name="Pham P.K."/>
            <person name="Cheuk R.F."/>
            <person name="Karlin-Newmann G."/>
            <person name="Liu S.X."/>
            <person name="Lam B."/>
            <person name="Sakano H."/>
            <person name="Wu T."/>
            <person name="Yu G."/>
            <person name="Miranda M."/>
            <person name="Quach H.L."/>
            <person name="Tripp M."/>
            <person name="Chang C.H."/>
            <person name="Lee J.M."/>
            <person name="Toriumi M.J."/>
            <person name="Chan M.M."/>
            <person name="Tang C.C."/>
            <person name="Onodera C.S."/>
            <person name="Deng J.M."/>
            <person name="Akiyama K."/>
            <person name="Ansari Y."/>
            <person name="Arakawa T."/>
            <person name="Banh J."/>
            <person name="Banno F."/>
            <person name="Bowser L."/>
            <person name="Brooks S.Y."/>
            <person name="Carninci P."/>
            <person name="Chao Q."/>
            <person name="Choy N."/>
            <person name="Enju A."/>
            <person name="Goldsmith A.D."/>
            <person name="Gurjal M."/>
            <person name="Hansen N.F."/>
            <person name="Hayashizaki Y."/>
            <person name="Johnson-Hopson C."/>
            <person name="Hsuan V.W."/>
            <person name="Iida K."/>
            <person name="Karnes M."/>
            <person name="Khan S."/>
            <person name="Koesema E."/>
            <person name="Ishida J."/>
            <person name="Jiang P.X."/>
            <person name="Jones T."/>
            <person name="Kawai J."/>
            <person name="Kamiya A."/>
            <person name="Meyers C."/>
            <person name="Nakajima M."/>
            <person name="Narusaka M."/>
            <person name="Seki M."/>
            <person name="Sakurai T."/>
            <person name="Satou M."/>
            <person name="Tamse R."/>
            <person name="Vaysberg M."/>
            <person name="Wallender E.K."/>
            <person name="Wong C."/>
            <person name="Yamamura Y."/>
            <person name="Yuan S."/>
            <person name="Shinozaki K."/>
            <person name="Davis R.W."/>
            <person name="Theologis A."/>
            <person name="Ecker J.R."/>
        </authorList>
    </citation>
    <scope>NUCLEOTIDE SEQUENCE [LARGE SCALE MRNA]</scope>
    <source>
        <strain>cv. Columbia</strain>
    </source>
</reference>
<protein>
    <recommendedName>
        <fullName>F-box/kelch-repeat protein At3g23880</fullName>
    </recommendedName>
</protein>